<proteinExistence type="inferred from homology"/>
<sequence length="156" mass="17447">MPRRRVVGQRKILPDPKFGSELLAKFVNVVMVDGKKSVSEAIVYGALDIIATKTGKEHLAVFEEALDNIRPAVEVKSRRVGGATYQVPVEVRPVRRNALAMRWLVDAARKRGEKSMAQRLAGELLDAADNKGSSVKKREDVHRMAEANKAFAHFRW</sequence>
<organism>
    <name type="scientific">Aeromonas hydrophila subsp. hydrophila (strain ATCC 7966 / DSM 30187 / BCRC 13018 / CCUG 14551 / JCM 1027 / KCTC 2358 / NCIMB 9240 / NCTC 8049)</name>
    <dbReference type="NCBI Taxonomy" id="380703"/>
    <lineage>
        <taxon>Bacteria</taxon>
        <taxon>Pseudomonadati</taxon>
        <taxon>Pseudomonadota</taxon>
        <taxon>Gammaproteobacteria</taxon>
        <taxon>Aeromonadales</taxon>
        <taxon>Aeromonadaceae</taxon>
        <taxon>Aeromonas</taxon>
    </lineage>
</organism>
<gene>
    <name evidence="1" type="primary">rpsG</name>
    <name type="ordered locus">AHA_4020</name>
</gene>
<protein>
    <recommendedName>
        <fullName evidence="1">Small ribosomal subunit protein uS7</fullName>
    </recommendedName>
    <alternativeName>
        <fullName evidence="2">30S ribosomal protein S7</fullName>
    </alternativeName>
</protein>
<feature type="chain" id="PRO_1000014138" description="Small ribosomal subunit protein uS7">
    <location>
        <begin position="1"/>
        <end position="156"/>
    </location>
</feature>
<accession>A0KQ97</accession>
<keyword id="KW-1185">Reference proteome</keyword>
<keyword id="KW-0687">Ribonucleoprotein</keyword>
<keyword id="KW-0689">Ribosomal protein</keyword>
<keyword id="KW-0694">RNA-binding</keyword>
<keyword id="KW-0699">rRNA-binding</keyword>
<keyword id="KW-0820">tRNA-binding</keyword>
<evidence type="ECO:0000255" key="1">
    <source>
        <dbReference type="HAMAP-Rule" id="MF_00480"/>
    </source>
</evidence>
<evidence type="ECO:0000305" key="2"/>
<comment type="function">
    <text evidence="1">One of the primary rRNA binding proteins, it binds directly to 16S rRNA where it nucleates assembly of the head domain of the 30S subunit. Is located at the subunit interface close to the decoding center, probably blocks exit of the E-site tRNA.</text>
</comment>
<comment type="subunit">
    <text evidence="1">Part of the 30S ribosomal subunit. Contacts proteins S9 and S11.</text>
</comment>
<comment type="similarity">
    <text evidence="1">Belongs to the universal ribosomal protein uS7 family.</text>
</comment>
<dbReference type="EMBL" id="CP000462">
    <property type="protein sequence ID" value="ABK37288.1"/>
    <property type="molecule type" value="Genomic_DNA"/>
</dbReference>
<dbReference type="RefSeq" id="WP_005306266.1">
    <property type="nucleotide sequence ID" value="NC_008570.1"/>
</dbReference>
<dbReference type="RefSeq" id="YP_858448.1">
    <property type="nucleotide sequence ID" value="NC_008570.1"/>
</dbReference>
<dbReference type="SMR" id="A0KQ97"/>
<dbReference type="STRING" id="380703.AHA_4020"/>
<dbReference type="EnsemblBacteria" id="ABK37288">
    <property type="protein sequence ID" value="ABK37288"/>
    <property type="gene ID" value="AHA_4020"/>
</dbReference>
<dbReference type="GeneID" id="47842997"/>
<dbReference type="KEGG" id="aha:AHA_4020"/>
<dbReference type="PATRIC" id="fig|380703.7.peg.3980"/>
<dbReference type="eggNOG" id="COG0049">
    <property type="taxonomic scope" value="Bacteria"/>
</dbReference>
<dbReference type="HOGENOM" id="CLU_072226_1_1_6"/>
<dbReference type="OrthoDB" id="9807653at2"/>
<dbReference type="PRO" id="PR:A0KQ97"/>
<dbReference type="Proteomes" id="UP000000756">
    <property type="component" value="Chromosome"/>
</dbReference>
<dbReference type="GO" id="GO:0015935">
    <property type="term" value="C:small ribosomal subunit"/>
    <property type="evidence" value="ECO:0007669"/>
    <property type="project" value="InterPro"/>
</dbReference>
<dbReference type="GO" id="GO:0019843">
    <property type="term" value="F:rRNA binding"/>
    <property type="evidence" value="ECO:0007669"/>
    <property type="project" value="UniProtKB-UniRule"/>
</dbReference>
<dbReference type="GO" id="GO:0003735">
    <property type="term" value="F:structural constituent of ribosome"/>
    <property type="evidence" value="ECO:0007669"/>
    <property type="project" value="InterPro"/>
</dbReference>
<dbReference type="GO" id="GO:0000049">
    <property type="term" value="F:tRNA binding"/>
    <property type="evidence" value="ECO:0007669"/>
    <property type="project" value="UniProtKB-UniRule"/>
</dbReference>
<dbReference type="GO" id="GO:0006412">
    <property type="term" value="P:translation"/>
    <property type="evidence" value="ECO:0007669"/>
    <property type="project" value="UniProtKB-UniRule"/>
</dbReference>
<dbReference type="CDD" id="cd14869">
    <property type="entry name" value="uS7_Bacteria"/>
    <property type="match status" value="1"/>
</dbReference>
<dbReference type="FunFam" id="1.10.455.10:FF:000001">
    <property type="entry name" value="30S ribosomal protein S7"/>
    <property type="match status" value="1"/>
</dbReference>
<dbReference type="Gene3D" id="1.10.455.10">
    <property type="entry name" value="Ribosomal protein S7 domain"/>
    <property type="match status" value="1"/>
</dbReference>
<dbReference type="HAMAP" id="MF_00480_B">
    <property type="entry name" value="Ribosomal_uS7_B"/>
    <property type="match status" value="1"/>
</dbReference>
<dbReference type="InterPro" id="IPR000235">
    <property type="entry name" value="Ribosomal_uS7"/>
</dbReference>
<dbReference type="InterPro" id="IPR005717">
    <property type="entry name" value="Ribosomal_uS7_bac/org-type"/>
</dbReference>
<dbReference type="InterPro" id="IPR020606">
    <property type="entry name" value="Ribosomal_uS7_CS"/>
</dbReference>
<dbReference type="InterPro" id="IPR023798">
    <property type="entry name" value="Ribosomal_uS7_dom"/>
</dbReference>
<dbReference type="InterPro" id="IPR036823">
    <property type="entry name" value="Ribosomal_uS7_dom_sf"/>
</dbReference>
<dbReference type="NCBIfam" id="TIGR01029">
    <property type="entry name" value="rpsG_bact"/>
    <property type="match status" value="1"/>
</dbReference>
<dbReference type="PANTHER" id="PTHR11205">
    <property type="entry name" value="RIBOSOMAL PROTEIN S7"/>
    <property type="match status" value="1"/>
</dbReference>
<dbReference type="Pfam" id="PF00177">
    <property type="entry name" value="Ribosomal_S7"/>
    <property type="match status" value="1"/>
</dbReference>
<dbReference type="PIRSF" id="PIRSF002122">
    <property type="entry name" value="RPS7p_RPS7a_RPS5e_RPS7o"/>
    <property type="match status" value="1"/>
</dbReference>
<dbReference type="SUPFAM" id="SSF47973">
    <property type="entry name" value="Ribosomal protein S7"/>
    <property type="match status" value="1"/>
</dbReference>
<dbReference type="PROSITE" id="PS00052">
    <property type="entry name" value="RIBOSOMAL_S7"/>
    <property type="match status" value="1"/>
</dbReference>
<reference key="1">
    <citation type="journal article" date="2006" name="J. Bacteriol.">
        <title>Genome sequence of Aeromonas hydrophila ATCC 7966T: jack of all trades.</title>
        <authorList>
            <person name="Seshadri R."/>
            <person name="Joseph S.W."/>
            <person name="Chopra A.K."/>
            <person name="Sha J."/>
            <person name="Shaw J."/>
            <person name="Graf J."/>
            <person name="Haft D.H."/>
            <person name="Wu M."/>
            <person name="Ren Q."/>
            <person name="Rosovitz M.J."/>
            <person name="Madupu R."/>
            <person name="Tallon L."/>
            <person name="Kim M."/>
            <person name="Jin S."/>
            <person name="Vuong H."/>
            <person name="Stine O.C."/>
            <person name="Ali A."/>
            <person name="Horneman A.J."/>
            <person name="Heidelberg J.F."/>
        </authorList>
    </citation>
    <scope>NUCLEOTIDE SEQUENCE [LARGE SCALE GENOMIC DNA]</scope>
    <source>
        <strain>ATCC 7966 / DSM 30187 / BCRC 13018 / CCUG 14551 / JCM 1027 / KCTC 2358 / NCIMB 9240 / NCTC 8049</strain>
    </source>
</reference>
<name>RS7_AERHH</name>